<evidence type="ECO:0000255" key="1">
    <source>
        <dbReference type="HAMAP-Rule" id="MF_00270"/>
    </source>
</evidence>
<evidence type="ECO:0000256" key="2">
    <source>
        <dbReference type="SAM" id="MobiDB-lite"/>
    </source>
</evidence>
<evidence type="ECO:0000305" key="3"/>
<proteinExistence type="inferred from homology"/>
<protein>
    <recommendedName>
        <fullName evidence="1">Small ribosomal subunit protein bS18c</fullName>
    </recommendedName>
    <alternativeName>
        <fullName evidence="3">30S ribosomal protein S18, chloroplastic</fullName>
    </alternativeName>
</protein>
<name>RR18_SACOF</name>
<accession>Q6ENU2</accession>
<reference key="1">
    <citation type="journal article" date="2004" name="DNA Res.">
        <title>Complete nucleotide sequence of the sugarcane (Saccharum officinarum) chloroplast genome: a comparative analysis of four monocot chloroplast genomes.</title>
        <authorList>
            <person name="Asano T."/>
            <person name="Tsudzuki T."/>
            <person name="Takahashi S."/>
            <person name="Shimada H."/>
            <person name="Kadowaki K."/>
        </authorList>
    </citation>
    <scope>NUCLEOTIDE SEQUENCE [LARGE SCALE GENOMIC DNA]</scope>
</reference>
<keyword id="KW-0150">Chloroplast</keyword>
<keyword id="KW-0934">Plastid</keyword>
<keyword id="KW-0687">Ribonucleoprotein</keyword>
<keyword id="KW-0689">Ribosomal protein</keyword>
<keyword id="KW-0694">RNA-binding</keyword>
<keyword id="KW-0699">rRNA-binding</keyword>
<comment type="subunit">
    <text>Part of the 30S ribosomal subunit.</text>
</comment>
<comment type="subcellular location">
    <subcellularLocation>
        <location>Plastid</location>
        <location>Chloroplast</location>
    </subcellularLocation>
</comment>
<comment type="similarity">
    <text evidence="1">Belongs to the bacterial ribosomal protein bS18 family.</text>
</comment>
<sequence length="163" mass="19723">MYISKQPFRKSKQPFRKSKQPFHKSKQPFRKFKQPFRKSKQPFRRRSRIGPGDRIDYRNMSLINRFISEQGKILSRRINRLTLKQQRLITLAIKQARILSFLPFRNYENEKQFQAQAISIITGPRHRKNRHIPQLTQKFNSNRNLRNSNQNLRNNNRNLSSDC</sequence>
<geneLocation type="chloroplast"/>
<organism>
    <name type="scientific">Saccharum officinarum</name>
    <name type="common">Sugarcane</name>
    <dbReference type="NCBI Taxonomy" id="4547"/>
    <lineage>
        <taxon>Eukaryota</taxon>
        <taxon>Viridiplantae</taxon>
        <taxon>Streptophyta</taxon>
        <taxon>Embryophyta</taxon>
        <taxon>Tracheophyta</taxon>
        <taxon>Spermatophyta</taxon>
        <taxon>Magnoliopsida</taxon>
        <taxon>Liliopsida</taxon>
        <taxon>Poales</taxon>
        <taxon>Poaceae</taxon>
        <taxon>PACMAD clade</taxon>
        <taxon>Panicoideae</taxon>
        <taxon>Andropogonodae</taxon>
        <taxon>Andropogoneae</taxon>
        <taxon>Saccharinae</taxon>
        <taxon>Saccharum</taxon>
        <taxon>Saccharum officinarum species complex</taxon>
    </lineage>
</organism>
<feature type="chain" id="PRO_0000111310" description="Small ribosomal subunit protein bS18c">
    <location>
        <begin position="1"/>
        <end position="163"/>
    </location>
</feature>
<feature type="region of interest" description="Disordered" evidence="2">
    <location>
        <begin position="1"/>
        <end position="52"/>
    </location>
</feature>
<feature type="region of interest" description="Disordered" evidence="2">
    <location>
        <begin position="144"/>
        <end position="163"/>
    </location>
</feature>
<feature type="compositionally biased region" description="Basic residues" evidence="2">
    <location>
        <begin position="7"/>
        <end position="48"/>
    </location>
</feature>
<gene>
    <name evidence="1" type="primary">rps18</name>
</gene>
<dbReference type="EMBL" id="AP006714">
    <property type="protein sequence ID" value="BAD27314.1"/>
    <property type="molecule type" value="Genomic_DNA"/>
</dbReference>
<dbReference type="RefSeq" id="YP_009389592.1">
    <property type="nucleotide sequence ID" value="NC_035224.1"/>
</dbReference>
<dbReference type="SMR" id="Q6ENU2"/>
<dbReference type="GeneID" id="33347836"/>
<dbReference type="GO" id="GO:0009507">
    <property type="term" value="C:chloroplast"/>
    <property type="evidence" value="ECO:0007669"/>
    <property type="project" value="UniProtKB-SubCell"/>
</dbReference>
<dbReference type="GO" id="GO:0005763">
    <property type="term" value="C:mitochondrial small ribosomal subunit"/>
    <property type="evidence" value="ECO:0007669"/>
    <property type="project" value="TreeGrafter"/>
</dbReference>
<dbReference type="GO" id="GO:0070181">
    <property type="term" value="F:small ribosomal subunit rRNA binding"/>
    <property type="evidence" value="ECO:0007669"/>
    <property type="project" value="TreeGrafter"/>
</dbReference>
<dbReference type="GO" id="GO:0003735">
    <property type="term" value="F:structural constituent of ribosome"/>
    <property type="evidence" value="ECO:0007669"/>
    <property type="project" value="InterPro"/>
</dbReference>
<dbReference type="GO" id="GO:0006412">
    <property type="term" value="P:translation"/>
    <property type="evidence" value="ECO:0007669"/>
    <property type="project" value="UniProtKB-UniRule"/>
</dbReference>
<dbReference type="FunFam" id="4.10.640.10:FF:000002">
    <property type="entry name" value="30S ribosomal protein S18, chloroplastic"/>
    <property type="match status" value="1"/>
</dbReference>
<dbReference type="Gene3D" id="4.10.640.10">
    <property type="entry name" value="Ribosomal protein S18"/>
    <property type="match status" value="1"/>
</dbReference>
<dbReference type="HAMAP" id="MF_00270">
    <property type="entry name" value="Ribosomal_bS18"/>
    <property type="match status" value="1"/>
</dbReference>
<dbReference type="InterPro" id="IPR001648">
    <property type="entry name" value="Ribosomal_bS18"/>
</dbReference>
<dbReference type="InterPro" id="IPR018275">
    <property type="entry name" value="Ribosomal_bS18_CS"/>
</dbReference>
<dbReference type="InterPro" id="IPR036870">
    <property type="entry name" value="Ribosomal_bS18_sf"/>
</dbReference>
<dbReference type="NCBIfam" id="TIGR00165">
    <property type="entry name" value="S18"/>
    <property type="match status" value="1"/>
</dbReference>
<dbReference type="PANTHER" id="PTHR13479">
    <property type="entry name" value="30S RIBOSOMAL PROTEIN S18"/>
    <property type="match status" value="1"/>
</dbReference>
<dbReference type="PANTHER" id="PTHR13479:SF40">
    <property type="entry name" value="SMALL RIBOSOMAL SUBUNIT PROTEIN BS18M"/>
    <property type="match status" value="1"/>
</dbReference>
<dbReference type="Pfam" id="PF01084">
    <property type="entry name" value="Ribosomal_S18"/>
    <property type="match status" value="1"/>
</dbReference>
<dbReference type="PRINTS" id="PR00974">
    <property type="entry name" value="RIBOSOMALS18"/>
</dbReference>
<dbReference type="SUPFAM" id="SSF46911">
    <property type="entry name" value="Ribosomal protein S18"/>
    <property type="match status" value="1"/>
</dbReference>
<dbReference type="PROSITE" id="PS00057">
    <property type="entry name" value="RIBOSOMAL_S18"/>
    <property type="match status" value="1"/>
</dbReference>